<sequence>MDFSSTIASQLNAGTILPEGIVIITLVGVLVGDLIFGRSSKSWLPYMAIIGLLASIVALYLAWDSPHPIGFLNSFNSDNLSIVFRAIIALSTAVTILMSIRYVEQTGTSLAEFIAIMLTATLGGMFLCGANELVMIFISLEMLSISSYLMTGYMKRDPRSNEAALKYLLIGASSSAIFLYGVSLLYGLSAGETALDAIATKIAAANGGESLGLAIALVFVIAGIAFKISAVPFHQWTPDVYEGSPTPVVAFLSVGSKAAGFALAIRLLVTAFASVGEEWHFVFTALAILSMVLGNVVALAQTSMKRMLAYSSIGQAGFVMIGLVAGTDAGYSSMVFYLLVYLFMNLGAFACIILFSLRTGTDKISEYAGLYQKDPLLTLALSICLLSLGGIPPLAGFFGKIYLFWAGWQAELYGLVILGLVTSVVSIYYYIRVVKMMVVKEPQEMSDAVKNYPQIRWNLPGMRPLQVGIVLTLIATSLAGILSNPLFTLANDSVTSTPILQSAIINTRISQVPTESK</sequence>
<feature type="chain" id="PRO_1000124731" description="NAD(P)H-quinone oxidoreductase subunit 2">
    <location>
        <begin position="1"/>
        <end position="517"/>
    </location>
</feature>
<feature type="transmembrane region" description="Helical" evidence="1">
    <location>
        <begin position="16"/>
        <end position="36"/>
    </location>
</feature>
<feature type="transmembrane region" description="Helical" evidence="1">
    <location>
        <begin position="43"/>
        <end position="63"/>
    </location>
</feature>
<feature type="transmembrane region" description="Helical" evidence="1">
    <location>
        <begin position="80"/>
        <end position="100"/>
    </location>
</feature>
<feature type="transmembrane region" description="Helical" evidence="1">
    <location>
        <begin position="110"/>
        <end position="130"/>
    </location>
</feature>
<feature type="transmembrane region" description="Helical" evidence="1">
    <location>
        <begin position="133"/>
        <end position="153"/>
    </location>
</feature>
<feature type="transmembrane region" description="Helical" evidence="1">
    <location>
        <begin position="168"/>
        <end position="188"/>
    </location>
</feature>
<feature type="transmembrane region" description="Helical" evidence="1">
    <location>
        <begin position="211"/>
        <end position="231"/>
    </location>
</feature>
<feature type="transmembrane region" description="Helical" evidence="1">
    <location>
        <begin position="245"/>
        <end position="265"/>
    </location>
</feature>
<feature type="transmembrane region" description="Helical" evidence="1">
    <location>
        <begin position="279"/>
        <end position="299"/>
    </location>
</feature>
<feature type="transmembrane region" description="Helical" evidence="1">
    <location>
        <begin position="307"/>
        <end position="327"/>
    </location>
</feature>
<feature type="transmembrane region" description="Helical" evidence="1">
    <location>
        <begin position="335"/>
        <end position="355"/>
    </location>
</feature>
<feature type="transmembrane region" description="Helical" evidence="1">
    <location>
        <begin position="379"/>
        <end position="399"/>
    </location>
</feature>
<feature type="transmembrane region" description="Helical" evidence="1">
    <location>
        <begin position="401"/>
        <end position="421"/>
    </location>
</feature>
<feature type="transmembrane region" description="Helical" evidence="1">
    <location>
        <begin position="467"/>
        <end position="487"/>
    </location>
</feature>
<comment type="function">
    <text evidence="1">NDH-1 shuttles electrons from an unknown electron donor, via FMN and iron-sulfur (Fe-S) centers, to quinones in the respiratory and/or the photosynthetic chain. The immediate electron acceptor for the enzyme in this species is believed to be plastoquinone. Couples the redox reaction to proton translocation, and thus conserves the redox energy in a proton gradient. Cyanobacterial NDH-1 also plays a role in inorganic carbon-concentration.</text>
</comment>
<comment type="catalytic activity">
    <reaction evidence="1">
        <text>a plastoquinone + NADH + (n+1) H(+)(in) = a plastoquinol + NAD(+) + n H(+)(out)</text>
        <dbReference type="Rhea" id="RHEA:42608"/>
        <dbReference type="Rhea" id="RHEA-COMP:9561"/>
        <dbReference type="Rhea" id="RHEA-COMP:9562"/>
        <dbReference type="ChEBI" id="CHEBI:15378"/>
        <dbReference type="ChEBI" id="CHEBI:17757"/>
        <dbReference type="ChEBI" id="CHEBI:57540"/>
        <dbReference type="ChEBI" id="CHEBI:57945"/>
        <dbReference type="ChEBI" id="CHEBI:62192"/>
    </reaction>
</comment>
<comment type="catalytic activity">
    <reaction evidence="1">
        <text>a plastoquinone + NADPH + (n+1) H(+)(in) = a plastoquinol + NADP(+) + n H(+)(out)</text>
        <dbReference type="Rhea" id="RHEA:42612"/>
        <dbReference type="Rhea" id="RHEA-COMP:9561"/>
        <dbReference type="Rhea" id="RHEA-COMP:9562"/>
        <dbReference type="ChEBI" id="CHEBI:15378"/>
        <dbReference type="ChEBI" id="CHEBI:17757"/>
        <dbReference type="ChEBI" id="CHEBI:57783"/>
        <dbReference type="ChEBI" id="CHEBI:58349"/>
        <dbReference type="ChEBI" id="CHEBI:62192"/>
    </reaction>
</comment>
<comment type="subunit">
    <text evidence="1">NDH-1 can be composed of about 15 different subunits; different subcomplexes with different compositions have been identified which probably have different functions.</text>
</comment>
<comment type="subcellular location">
    <subcellularLocation>
        <location evidence="1">Cellular thylakoid membrane</location>
        <topology evidence="1">Multi-pass membrane protein</topology>
    </subcellularLocation>
</comment>
<comment type="similarity">
    <text evidence="1">Belongs to the complex I subunit 2 family.</text>
</comment>
<evidence type="ECO:0000255" key="1">
    <source>
        <dbReference type="HAMAP-Rule" id="MF_00445"/>
    </source>
</evidence>
<name>NU2C_RIPO1</name>
<protein>
    <recommendedName>
        <fullName evidence="1">NAD(P)H-quinone oxidoreductase subunit 2</fullName>
        <ecNumber evidence="1">7.1.1.-</ecNumber>
    </recommendedName>
    <alternativeName>
        <fullName evidence="1">NAD(P)H dehydrogenase subunit 2</fullName>
    </alternativeName>
    <alternativeName>
        <fullName evidence="1">NADH-plastoquinone oxidoreductase subunit 2</fullName>
    </alternativeName>
    <alternativeName>
        <fullName evidence="1">NDH-1, subunit 2</fullName>
    </alternativeName>
</protein>
<reference key="1">
    <citation type="journal article" date="2011" name="MBio">
        <title>Novel metabolic attributes of the genus Cyanothece, comprising a group of unicellular nitrogen-fixing Cyanobacteria.</title>
        <authorList>
            <person name="Bandyopadhyay A."/>
            <person name="Elvitigala T."/>
            <person name="Welsh E."/>
            <person name="Stockel J."/>
            <person name="Liberton M."/>
            <person name="Min H."/>
            <person name="Sherman L.A."/>
            <person name="Pakrasi H.B."/>
        </authorList>
    </citation>
    <scope>NUCLEOTIDE SEQUENCE [LARGE SCALE GENOMIC DNA]</scope>
    <source>
        <strain>PCC 8801 / RF-1</strain>
    </source>
</reference>
<dbReference type="EC" id="7.1.1.-" evidence="1"/>
<dbReference type="EMBL" id="CP001287">
    <property type="protein sequence ID" value="ACK67506.1"/>
    <property type="molecule type" value="Genomic_DNA"/>
</dbReference>
<dbReference type="RefSeq" id="WP_012596764.1">
    <property type="nucleotide sequence ID" value="NC_011726.1"/>
</dbReference>
<dbReference type="SMR" id="B7K1G4"/>
<dbReference type="STRING" id="41431.PCC8801_3541"/>
<dbReference type="KEGG" id="cyp:PCC8801_3541"/>
<dbReference type="eggNOG" id="COG1007">
    <property type="taxonomic scope" value="Bacteria"/>
</dbReference>
<dbReference type="HOGENOM" id="CLU_007100_1_5_3"/>
<dbReference type="OrthoDB" id="9811718at2"/>
<dbReference type="Proteomes" id="UP000008204">
    <property type="component" value="Chromosome"/>
</dbReference>
<dbReference type="GO" id="GO:0031676">
    <property type="term" value="C:plasma membrane-derived thylakoid membrane"/>
    <property type="evidence" value="ECO:0007669"/>
    <property type="project" value="UniProtKB-SubCell"/>
</dbReference>
<dbReference type="GO" id="GO:0008137">
    <property type="term" value="F:NADH dehydrogenase (ubiquinone) activity"/>
    <property type="evidence" value="ECO:0007669"/>
    <property type="project" value="InterPro"/>
</dbReference>
<dbReference type="GO" id="GO:0048038">
    <property type="term" value="F:quinone binding"/>
    <property type="evidence" value="ECO:0007669"/>
    <property type="project" value="UniProtKB-KW"/>
</dbReference>
<dbReference type="GO" id="GO:0042773">
    <property type="term" value="P:ATP synthesis coupled electron transport"/>
    <property type="evidence" value="ECO:0007669"/>
    <property type="project" value="InterPro"/>
</dbReference>
<dbReference type="GO" id="GO:0019684">
    <property type="term" value="P:photosynthesis, light reaction"/>
    <property type="evidence" value="ECO:0007669"/>
    <property type="project" value="UniProtKB-UniRule"/>
</dbReference>
<dbReference type="HAMAP" id="MF_00445">
    <property type="entry name" value="NDH1_NuoN_1"/>
    <property type="match status" value="1"/>
</dbReference>
<dbReference type="InterPro" id="IPR010096">
    <property type="entry name" value="NADH-Q_OxRdtase_suN/2"/>
</dbReference>
<dbReference type="InterPro" id="IPR001750">
    <property type="entry name" value="ND/Mrp_TM"/>
</dbReference>
<dbReference type="InterPro" id="IPR045693">
    <property type="entry name" value="Ndh2_N"/>
</dbReference>
<dbReference type="NCBIfam" id="TIGR01770">
    <property type="entry name" value="NDH_I_N"/>
    <property type="match status" value="1"/>
</dbReference>
<dbReference type="NCBIfam" id="NF002701">
    <property type="entry name" value="PRK02504.1"/>
    <property type="match status" value="1"/>
</dbReference>
<dbReference type="PANTHER" id="PTHR22773">
    <property type="entry name" value="NADH DEHYDROGENASE"/>
    <property type="match status" value="1"/>
</dbReference>
<dbReference type="Pfam" id="PF19530">
    <property type="entry name" value="Ndh2_N"/>
    <property type="match status" value="1"/>
</dbReference>
<dbReference type="Pfam" id="PF00361">
    <property type="entry name" value="Proton_antipo_M"/>
    <property type="match status" value="1"/>
</dbReference>
<dbReference type="PRINTS" id="PR01434">
    <property type="entry name" value="NADHDHGNASE5"/>
</dbReference>
<organism>
    <name type="scientific">Rippkaea orientalis (strain PCC 8801 / RF-1)</name>
    <name type="common">Cyanothece sp. (strain PCC 8801)</name>
    <dbReference type="NCBI Taxonomy" id="41431"/>
    <lineage>
        <taxon>Bacteria</taxon>
        <taxon>Bacillati</taxon>
        <taxon>Cyanobacteriota</taxon>
        <taxon>Cyanophyceae</taxon>
        <taxon>Oscillatoriophycideae</taxon>
        <taxon>Chroococcales</taxon>
        <taxon>Aphanothecaceae</taxon>
        <taxon>Rippkaea</taxon>
        <taxon>Rippkaea orientalis</taxon>
    </lineage>
</organism>
<proteinExistence type="inferred from homology"/>
<gene>
    <name evidence="1" type="primary">ndhB</name>
    <name type="ordered locus">PCC8801_3541</name>
</gene>
<keyword id="KW-0472">Membrane</keyword>
<keyword id="KW-0520">NAD</keyword>
<keyword id="KW-0521">NADP</keyword>
<keyword id="KW-0618">Plastoquinone</keyword>
<keyword id="KW-0874">Quinone</keyword>
<keyword id="KW-1185">Reference proteome</keyword>
<keyword id="KW-0793">Thylakoid</keyword>
<keyword id="KW-1278">Translocase</keyword>
<keyword id="KW-0812">Transmembrane</keyword>
<keyword id="KW-1133">Transmembrane helix</keyword>
<keyword id="KW-0813">Transport</keyword>
<accession>B7K1G4</accession>